<name>CLE2C_CONCL</name>
<protein>
    <recommendedName>
        <fullName evidence="3">Conotoxin Cal14.2c</fullName>
    </recommendedName>
    <alternativeName>
        <fullName evidence="2">Conotoxin Cl14.2c</fullName>
    </alternativeName>
</protein>
<organism>
    <name type="scientific">Californiconus californicus</name>
    <name type="common">California cone</name>
    <name type="synonym">Conus californicus</name>
    <dbReference type="NCBI Taxonomy" id="1736779"/>
    <lineage>
        <taxon>Eukaryota</taxon>
        <taxon>Metazoa</taxon>
        <taxon>Spiralia</taxon>
        <taxon>Lophotrochozoa</taxon>
        <taxon>Mollusca</taxon>
        <taxon>Gastropoda</taxon>
        <taxon>Caenogastropoda</taxon>
        <taxon>Neogastropoda</taxon>
        <taxon>Conoidea</taxon>
        <taxon>Conidae</taxon>
        <taxon>Californiconus</taxon>
    </lineage>
</organism>
<evidence type="ECO:0000255" key="1"/>
<evidence type="ECO:0000303" key="2">
    <source>
    </source>
</evidence>
<evidence type="ECO:0000305" key="3"/>
<evidence type="ECO:0000305" key="4">
    <source>
    </source>
</evidence>
<dbReference type="EMBL" id="FJ959133">
    <property type="protein sequence ID" value="ADB93103.1"/>
    <property type="molecule type" value="Genomic_DNA"/>
</dbReference>
<dbReference type="ConoServer" id="4015">
    <property type="toxin name" value="Cal14.2c precursor"/>
</dbReference>
<dbReference type="GO" id="GO:0005576">
    <property type="term" value="C:extracellular region"/>
    <property type="evidence" value="ECO:0007669"/>
    <property type="project" value="UniProtKB-SubCell"/>
</dbReference>
<dbReference type="GO" id="GO:0099106">
    <property type="term" value="F:ion channel regulator activity"/>
    <property type="evidence" value="ECO:0007669"/>
    <property type="project" value="UniProtKB-KW"/>
</dbReference>
<dbReference type="GO" id="GO:0090729">
    <property type="term" value="F:toxin activity"/>
    <property type="evidence" value="ECO:0007669"/>
    <property type="project" value="UniProtKB-KW"/>
</dbReference>
<reference key="1">
    <citation type="journal article" date="2010" name="Mol. Phylogenet. Evol.">
        <title>Evolution of Conus peptide toxins: analysis of Conus californicus Reeve, 1844.</title>
        <authorList>
            <person name="Biggs J.S."/>
            <person name="Watkins M."/>
            <person name="Puillandre N."/>
            <person name="Ownby J.P."/>
            <person name="Lopez-Vera E."/>
            <person name="Christensen S."/>
            <person name="Moreno K.J."/>
            <person name="Bernaldez J."/>
            <person name="Licea-Navarro A."/>
            <person name="Corneli P.S."/>
            <person name="Olivera B.M."/>
        </authorList>
    </citation>
    <scope>NUCLEOTIDE SEQUENCE [GENOMIC DNA]</scope>
</reference>
<sequence>MNVTVMFLVLLLLTMPLTDGFNIRATNGGELFGPVQRDAGNVLDHGFQRRRDCPPWCPTSHCNAGTC</sequence>
<feature type="signal peptide" evidence="1">
    <location>
        <begin position="1"/>
        <end position="20"/>
    </location>
</feature>
<feature type="propeptide" id="PRO_0000415010" evidence="4">
    <location>
        <begin position="21"/>
        <end position="48"/>
    </location>
</feature>
<feature type="peptide" id="PRO_0000415011" description="Conotoxin Cal14.2c" evidence="4">
    <location>
        <begin position="52"/>
        <end position="67"/>
    </location>
</feature>
<comment type="function">
    <text evidence="3">Probable neurotoxin with unknown target. Possibly targets ion channels.</text>
</comment>
<comment type="subcellular location">
    <subcellularLocation>
        <location evidence="3">Secreted</location>
    </subcellularLocation>
</comment>
<comment type="tissue specificity">
    <text evidence="3">Expressed by the venom duct.</text>
</comment>
<comment type="domain">
    <text evidence="3">The cysteine framework is XIV (C-C-C-C).</text>
</comment>
<comment type="PTM">
    <text evidence="3">Contains 2 disulfide bonds.</text>
</comment>
<comment type="similarity">
    <text evidence="3">Belongs to the conotoxin L superfamily.</text>
</comment>
<keyword id="KW-0165">Cleavage on pair of basic residues</keyword>
<keyword id="KW-1015">Disulfide bond</keyword>
<keyword id="KW-0872">Ion channel impairing toxin</keyword>
<keyword id="KW-0528">Neurotoxin</keyword>
<keyword id="KW-0964">Secreted</keyword>
<keyword id="KW-0732">Signal</keyword>
<keyword id="KW-0800">Toxin</keyword>
<proteinExistence type="inferred from homology"/>
<accession>D6C4I7</accession>